<protein>
    <recommendedName>
        <fullName evidence="18">Ethylene-inducing xylanase</fullName>
        <shortName evidence="18">EIX</shortName>
        <ecNumber evidence="3">3.2.1.8</ecNumber>
    </recommendedName>
    <alternativeName>
        <fullName evidence="18">Endo-1,4-beta-xylanase EIX</fullName>
    </alternativeName>
    <alternativeName>
        <fullName evidence="19">Ethylene biosynthesis-inducing factor</fullName>
        <shortName evidence="19">EIF</shortName>
    </alternativeName>
</protein>
<accession>Q9UVF9</accession>
<sequence>MVSFTTLLAGFVAVTGVLSAPTETVEVVDVEKRQTIGPGTGFNNGYYYSYWNDGHSGVTYTNGAGGSFSVNWANSGNFVGGKGWNPGSSSRVINFSGSYNPNGNSYLSVYGWSKNPLIEYYIVENFGTYNPSTGTTKLGEVTSDGSVYDIYRTQRVNQPSIIGTATFYQYWSVRRNHAPAARSRLRTTSNAWRNLGLTLGTLDYQIIAVEGYFSSGNANINVS</sequence>
<proteinExistence type="evidence at protein level"/>
<name>EIX_HYPRU</name>
<reference key="1">
    <citation type="journal article" date="1999" name="Plant Physiol.">
        <title>A point mutation in the ethylene-inducing xylanase elicitor inhibits the beta-1-4-endoxylanase activity but not the elicitation activity.</title>
        <authorList>
            <person name="Furman-Matarasso N."/>
            <person name="Cohen E."/>
            <person name="Du Q."/>
            <person name="Chejanovsky N."/>
            <person name="Hanania U."/>
            <person name="Avni A."/>
        </authorList>
    </citation>
    <scope>NUCLEOTIDE SEQUENCE [MRNA]</scope>
    <scope>FUNCTION</scope>
    <scope>SUBCELLULAR LOCATION</scope>
    <scope>MUTAGENESIS OF GLU-86 AND GLU-177</scope>
</reference>
<reference key="2">
    <citation type="journal article" date="1989" name="Plant Physiol.">
        <title>Ethylene biosynthesis-inducing protein from cellulysin is an endoxylanase.</title>
        <authorList>
            <person name="Fuchs Y."/>
            <person name="Saxena A."/>
            <person name="Gamble H.R."/>
            <person name="Anderson J.D."/>
        </authorList>
    </citation>
    <scope>FUNCTION</scope>
</reference>
<reference key="3">
    <citation type="journal article" date="1990" name="Plant Physiol.">
        <title>Xylanase, a novel elicitor of pathogenesis-related proteins in tobacco, uses a non-ethylene pathway for induction.</title>
        <authorList>
            <person name="Lotan T."/>
            <person name="Fluhr R."/>
        </authorList>
    </citation>
    <scope>FUNCTION</scope>
</reference>
<reference key="4">
    <citation type="journal article" date="1990" name="Plant Physiol.">
        <title>An Ethylene Biosynthesis-Inducing Endoxylanase Elicits Electrolyte Leakage and Necrosis in Nicotiana tabacum cv Xanthi Leaves.</title>
        <authorList>
            <person name="Bailey B.A."/>
            <person name="Dean J.F."/>
            <person name="Anderson J.D."/>
        </authorList>
    </citation>
    <scope>FUNCTION</scope>
</reference>
<reference key="5">
    <citation type="journal article" date="1991" name="Plant Physiol.">
        <title>Ethylene Biosynthesis-Inducing Xylanase: III. Product Characterization.</title>
        <authorList>
            <person name="Dean J.F."/>
            <person name="Gross K.C."/>
            <person name="Anderson J.D."/>
        </authorList>
    </citation>
    <scope>FUNCTION</scope>
    <scope>CATALYTIC ACTIVITY</scope>
    <scope>BIOPHYSICOCHEMICAL PROPERTIES</scope>
</reference>
<reference key="6">
    <citation type="journal article" date="1991" name="Plant Physiol.">
        <title>Ethylene Biosynthesis-Inducing Endoxylanase Is Translocated through the Xylem of Nicotiana tabacum cv Xanthi Plants.</title>
        <authorList>
            <person name="Bailey B.A."/>
            <person name="Taylor R."/>
            <person name="Dean J.F."/>
            <person name="Anderson J.D."/>
        </authorList>
    </citation>
    <scope>FUNCTION</scope>
    <scope>SUBCELLULAR LOCATION</scope>
</reference>
<reference key="7">
    <citation type="journal article" date="1992" name="Plant Physiol.">
        <title>Alterations in Nicotiana tabacum L. cv Xanthi Cell Membrane Function following Treatment with an Ethylene Biosynthesis-Inducing Endoxylanase.</title>
        <authorList>
            <person name="Bailey B.A."/>
            <person name="Korcak R.F."/>
            <person name="Anderson J.D."/>
        </authorList>
    </citation>
    <scope>FUNCTION</scope>
</reference>
<reference key="8">
    <citation type="journal article" date="1992" name="Plant Physiol.">
        <title>Characteristics of ethylene biosynthesis-inducing xylanase movement in tobacco leaves.</title>
        <authorList>
            <person name="Sharon A."/>
            <person name="Bailey B.A."/>
            <person name="McMurtry J.P."/>
            <person name="Taylor R."/>
            <person name="Anderson J.D."/>
        </authorList>
    </citation>
    <scope>FUNCTION</scope>
    <scope>SUBCELLULAR LOCATION</scope>
</reference>
<reference key="9">
    <citation type="journal article" date="1993" name="Plant Physiol.">
        <title>Sensitivity to an Ethylene Biosynthesis-Inducing Endoxylanase in Nicotiana tabacum L. cv Xanthi Is Controlled by a Single Dominant Gene.</title>
        <authorList>
            <person name="Bailey B.A."/>
            <person name="Korcak R.F."/>
            <person name="Anderson J.D."/>
        </authorList>
    </citation>
    <scope>FUNCTION</scope>
</reference>
<reference key="10">
    <citation type="journal article" date="1994" name="Plant Physiol.">
        <title>Induction of ethylene biosynthesis in Nicotiana tabacum by a Trichoderma viride xylanase is correlated to the accumulation of 1-aminocyclopropane-1-carboxylic acid (ACC) synthase and ACC oxidase transcripts.</title>
        <authorList>
            <person name="Avni A."/>
            <person name="Bailey B.A."/>
            <person name="Mattoo A.K."/>
            <person name="Anderson J.D."/>
        </authorList>
    </citation>
    <scope>FUNCTION</scope>
</reference>
<reference key="11">
    <citation type="journal article" date="2004" name="Plant Cell">
        <title>The receptor for the fungal elicitor ethylene-inducing xylanase is a member of a resistance-like gene family in tomato.</title>
        <authorList>
            <person name="Ron M."/>
            <person name="Avni A."/>
        </authorList>
    </citation>
    <scope>FUNCTION</scope>
    <scope>INTERACTION WITH TOMATO LEEIX2</scope>
</reference>
<reference key="12">
    <citation type="journal article" date="2009" name="Plant J.">
        <title>EHD2 inhibits ligand-induced endocytosis and signaling of the leucine-rich repeat receptor-like protein LeEix2.</title>
        <authorList>
            <person name="Bar M."/>
            <person name="Avni A."/>
        </authorList>
    </citation>
    <scope>FUNCTION</scope>
    <scope>INTERACTION WITH TOMATO LEEIX2</scope>
</reference>
<reference key="13">
    <citation type="journal article" date="2010" name="Plant Physiol.">
        <title>Regulation of microbe-associated molecular pattern-induced hypersensitive cell death, phytoalexin production, and defense gene expression by calcineurin B-like protein-interacting protein kinases, OsCIPK14/15, in rice cultured cells.</title>
        <authorList>
            <person name="Kurusu T."/>
            <person name="Hamada J."/>
            <person name="Nokajima H."/>
            <person name="Kitagawa Y."/>
            <person name="Kiyoduka M."/>
            <person name="Takahashi A."/>
            <person name="Hanamata S."/>
            <person name="Ohno R."/>
            <person name="Hayashi T."/>
            <person name="Okada K."/>
            <person name="Koga J."/>
            <person name="Hirochika H."/>
            <person name="Yamane H."/>
            <person name="Kuchitsu K."/>
        </authorList>
    </citation>
    <scope>FUNCTION</scope>
</reference>
<reference key="14">
    <citation type="journal article" date="2014" name="Plant Physiol.">
        <title>Sterol-dependent induction of plant defense responses by a microbe-associated molecular pattern from Trichoderma viride.</title>
        <authorList>
            <person name="Sharfman M."/>
            <person name="Bar M."/>
            <person name="Schuster S."/>
            <person name="Leibman M."/>
            <person name="Avni A."/>
        </authorList>
    </citation>
    <scope>FUNCTION</scope>
</reference>
<reference key="15">
    <citation type="journal article" date="2022" name="Sci. Rep.">
        <title>A cell-free approach to identify binding hotspots in plant immune receptors.</title>
        <authorList>
            <person name="Markou G.C."/>
            <person name="Sarkar C.A."/>
        </authorList>
    </citation>
    <scope>FUNCTION</scope>
    <scope>INTERACTION WITH TOMATO LEEIX2</scope>
</reference>
<dbReference type="EC" id="3.2.1.8" evidence="3"/>
<dbReference type="EMBL" id="AJ012718">
    <property type="protein sequence ID" value="CAB60757.1"/>
    <property type="molecule type" value="mRNA"/>
</dbReference>
<dbReference type="CAZy" id="GH11">
    <property type="family name" value="Glycoside Hydrolase Family 11"/>
</dbReference>
<dbReference type="BRENDA" id="3.2.1.8">
    <property type="organism ID" value="6447"/>
</dbReference>
<dbReference type="UniPathway" id="UPA00114"/>
<dbReference type="GO" id="GO:0031176">
    <property type="term" value="F:endo-1,4-beta-xylanase activity"/>
    <property type="evidence" value="ECO:0007669"/>
    <property type="project" value="UniProtKB-UniRule"/>
</dbReference>
<dbReference type="GO" id="GO:0045493">
    <property type="term" value="P:xylan catabolic process"/>
    <property type="evidence" value="ECO:0007669"/>
    <property type="project" value="UniProtKB-UniRule"/>
</dbReference>
<dbReference type="FunFam" id="2.60.120.180:FF:000001">
    <property type="entry name" value="Endo-1,4-beta-xylanase"/>
    <property type="match status" value="1"/>
</dbReference>
<dbReference type="Gene3D" id="2.60.120.180">
    <property type="match status" value="1"/>
</dbReference>
<dbReference type="InterPro" id="IPR013320">
    <property type="entry name" value="ConA-like_dom_sf"/>
</dbReference>
<dbReference type="InterPro" id="IPR013319">
    <property type="entry name" value="GH11/12"/>
</dbReference>
<dbReference type="InterPro" id="IPR018208">
    <property type="entry name" value="GH11_AS_1"/>
</dbReference>
<dbReference type="InterPro" id="IPR033119">
    <property type="entry name" value="GH11_AS_2"/>
</dbReference>
<dbReference type="InterPro" id="IPR033123">
    <property type="entry name" value="GH11_dom"/>
</dbReference>
<dbReference type="InterPro" id="IPR001137">
    <property type="entry name" value="Glyco_hydro_11"/>
</dbReference>
<dbReference type="PANTHER" id="PTHR46828:SF3">
    <property type="entry name" value="ENDO-1,4-BETA-XYLANASE"/>
    <property type="match status" value="1"/>
</dbReference>
<dbReference type="PANTHER" id="PTHR46828">
    <property type="entry name" value="ENDO-1,4-BETA-XYLANASE A-RELATED"/>
    <property type="match status" value="1"/>
</dbReference>
<dbReference type="Pfam" id="PF00457">
    <property type="entry name" value="Glyco_hydro_11"/>
    <property type="match status" value="1"/>
</dbReference>
<dbReference type="PRINTS" id="PR00911">
    <property type="entry name" value="GLHYDRLASE11"/>
</dbReference>
<dbReference type="SUPFAM" id="SSF49899">
    <property type="entry name" value="Concanavalin A-like lectins/glucanases"/>
    <property type="match status" value="1"/>
</dbReference>
<dbReference type="PROSITE" id="PS00776">
    <property type="entry name" value="GH11_1"/>
    <property type="match status" value="1"/>
</dbReference>
<dbReference type="PROSITE" id="PS00777">
    <property type="entry name" value="GH11_2"/>
    <property type="match status" value="1"/>
</dbReference>
<dbReference type="PROSITE" id="PS51761">
    <property type="entry name" value="GH11_3"/>
    <property type="match status" value="1"/>
</dbReference>
<keyword id="KW-0119">Carbohydrate metabolism</keyword>
<keyword id="KW-0325">Glycoprotein</keyword>
<keyword id="KW-0326">Glycosidase</keyword>
<keyword id="KW-0378">Hydrolase</keyword>
<keyword id="KW-0624">Polysaccharide degradation</keyword>
<keyword id="KW-0964">Secreted</keyword>
<keyword id="KW-0732">Signal</keyword>
<keyword id="KW-0858">Xylan degradation</keyword>
<feature type="signal peptide" evidence="1">
    <location>
        <begin position="1"/>
        <end position="19"/>
    </location>
</feature>
<feature type="chain" id="PRO_5004338242" description="Ethylene-inducing xylanase">
    <location>
        <begin position="20"/>
        <end position="223"/>
    </location>
</feature>
<feature type="domain" description="GH11" evidence="3">
    <location>
        <begin position="34"/>
        <end position="223"/>
    </location>
</feature>
<feature type="active site" description="Nucleophile" evidence="3">
    <location>
        <position position="119"/>
    </location>
</feature>
<feature type="active site" description="Proton donor" evidence="3">
    <location>
        <position position="210"/>
    </location>
</feature>
<feature type="glycosylation site" description="N-linked (GlcNAc...) asparagine" evidence="2">
    <location>
        <position position="94"/>
    </location>
</feature>
<organism>
    <name type="scientific">Hypocrea rufa</name>
    <name type="common">Trichoderma viride</name>
    <dbReference type="NCBI Taxonomy" id="5547"/>
    <lineage>
        <taxon>Eukaryota</taxon>
        <taxon>Fungi</taxon>
        <taxon>Dikarya</taxon>
        <taxon>Ascomycota</taxon>
        <taxon>Pezizomycotina</taxon>
        <taxon>Sordariomycetes</taxon>
        <taxon>Hypocreomycetidae</taxon>
        <taxon>Hypocreales</taxon>
        <taxon>Hypocreaceae</taxon>
        <taxon>Trichoderma</taxon>
    </lineage>
</organism>
<gene>
    <name evidence="18" type="primary">EIX</name>
</gene>
<comment type="function">
    <text evidence="4 5 6 7 8 9 10 11 12 13 14 15 16 17">Endo-1,4-beta-xylanase involved in the hydrolysis of xylan, a major structural heterogeneous polysaccharide found in plant biomass representing the second most abundant polysaccharide in the biosphere, after cellulose (PubMed:16668223). Acts as an elicitor of plant defense responses in hosts such as tobacco (Nicotiana tabacum) or tomato (Solanum lycopersicum) (PubMed:12231760, PubMed:16666504, PubMed:16667541, PubMed:16667926, PubMed:16668506, PubMed:7824643). Induces the production of ethylene and leads alterations in membrane function with rapid efflux of potassium, uptake of calcium, alkalization of the medium, increased leakage of cellular components and necrosis in plant hosts (PubMed:12231760, PubMed:16653055, PubMed:16666504, PubMed:16667541, PubMed:16667926, PubMed:16668506, PubMed:20357140, PubMed:24351686). EIX is translocated through the xylem of the host plant to the leaf mesophyll, leading to host response to pathogen-derived extracellular proteins in tissues distant from the invading pathogen (PubMed:16653240, PubMed:16668506). Greatly enhances the expression of two calcineurin B-like proteins-interacting protein kinases (CIPKs) family members, OsCIPK14 and OsCIPK15, in rice cultured cells (PubMed:20357140). In tomato, triggers the defense response via binding to and subsequent internalization of the LeEix2 receptor (PubMed:15155877, PubMed:19392695, PubMed:35017559).</text>
</comment>
<comment type="catalytic activity">
    <reaction evidence="11">
        <text>Endohydrolysis of (1-&gt;4)-beta-D-xylosidic linkages in xylans.</text>
        <dbReference type="EC" id="3.2.1.8"/>
    </reaction>
</comment>
<comment type="biophysicochemical properties">
    <kinetics>
        <KM evidence="11">3.2 mg/ml for xylan at 20 degrees Celsius</KM>
        <KM evidence="11">4.7 mg/ml for xylan at 30 degrees Celsius</KM>
        <KM evidence="11">9.2 mg/ml for xylan at 40 degrees Celsius</KM>
        <Vmax evidence="11">682.0 umol/min/mg enzyme towards xylan at 20 degress Celsius</Vmax>
        <Vmax evidence="11">950.0 umol/min/mg enzyme towards xylan at 30 degress Celsius</Vmax>
        <Vmax evidence="11">1966.0 umol/min/mg enzyme towards xylan at 40 degress Celsius</Vmax>
    </kinetics>
</comment>
<comment type="pathway">
    <text evidence="3 11">Glycan degradation; xylan degradation.</text>
</comment>
<comment type="subunit">
    <text evidence="5 13 16">Interactc with tomato LeEix2 receptor to trigger its internalization.</text>
</comment>
<comment type="subcellular location">
    <subcellularLocation>
        <location evidence="7 12">Secreted</location>
    </subcellularLocation>
    <text evidence="7 12">Translocated through the xylem of the host plant to the leaf mesophyll, where it directly elicits plant defense responses.</text>
</comment>
<comment type="similarity">
    <text evidence="3">Belongs to the glycosyl hydrolase 11 (cellulase G) family.</text>
</comment>
<evidence type="ECO:0000255" key="1"/>
<evidence type="ECO:0000255" key="2">
    <source>
        <dbReference type="PROSITE-ProRule" id="PRU00498"/>
    </source>
</evidence>
<evidence type="ECO:0000255" key="3">
    <source>
        <dbReference type="PROSITE-ProRule" id="PRU01097"/>
    </source>
</evidence>
<evidence type="ECO:0000269" key="4">
    <source>
    </source>
</evidence>
<evidence type="ECO:0000269" key="5">
    <source>
    </source>
</evidence>
<evidence type="ECO:0000269" key="6">
    <source>
    </source>
</evidence>
<evidence type="ECO:0000269" key="7">
    <source>
    </source>
</evidence>
<evidence type="ECO:0000269" key="8">
    <source>
    </source>
</evidence>
<evidence type="ECO:0000269" key="9">
    <source>
    </source>
</evidence>
<evidence type="ECO:0000269" key="10">
    <source>
    </source>
</evidence>
<evidence type="ECO:0000269" key="11">
    <source>
    </source>
</evidence>
<evidence type="ECO:0000269" key="12">
    <source>
    </source>
</evidence>
<evidence type="ECO:0000269" key="13">
    <source>
    </source>
</evidence>
<evidence type="ECO:0000269" key="14">
    <source>
    </source>
</evidence>
<evidence type="ECO:0000269" key="15">
    <source>
    </source>
</evidence>
<evidence type="ECO:0000269" key="16">
    <source>
    </source>
</evidence>
<evidence type="ECO:0000269" key="17">
    <source>
    </source>
</evidence>
<evidence type="ECO:0000303" key="18">
    <source>
    </source>
</evidence>
<evidence type="ECO:0000303" key="19">
    <source>
    </source>
</evidence>